<accession>A3P0B4</accession>
<comment type="function">
    <text evidence="1">Involved in the binding of tRNA to the ribosomes.</text>
</comment>
<comment type="subunit">
    <text evidence="1">Part of the 30S ribosomal subunit.</text>
</comment>
<comment type="similarity">
    <text evidence="1">Belongs to the universal ribosomal protein uS10 family.</text>
</comment>
<gene>
    <name evidence="1" type="primary">rpsJ</name>
    <name type="ordered locus">BURPS1106A_3805</name>
</gene>
<keyword id="KW-0687">Ribonucleoprotein</keyword>
<keyword id="KW-0689">Ribosomal protein</keyword>
<reference key="1">
    <citation type="journal article" date="2010" name="Genome Biol. Evol.">
        <title>Continuing evolution of Burkholderia mallei through genome reduction and large-scale rearrangements.</title>
        <authorList>
            <person name="Losada L."/>
            <person name="Ronning C.M."/>
            <person name="DeShazer D."/>
            <person name="Woods D."/>
            <person name="Fedorova N."/>
            <person name="Kim H.S."/>
            <person name="Shabalina S.A."/>
            <person name="Pearson T.R."/>
            <person name="Brinkac L."/>
            <person name="Tan P."/>
            <person name="Nandi T."/>
            <person name="Crabtree J."/>
            <person name="Badger J."/>
            <person name="Beckstrom-Sternberg S."/>
            <person name="Saqib M."/>
            <person name="Schutzer S.E."/>
            <person name="Keim P."/>
            <person name="Nierman W.C."/>
        </authorList>
    </citation>
    <scope>NUCLEOTIDE SEQUENCE [LARGE SCALE GENOMIC DNA]</scope>
    <source>
        <strain>1106a</strain>
    </source>
</reference>
<name>RS10_BURP0</name>
<organism>
    <name type="scientific">Burkholderia pseudomallei (strain 1106a)</name>
    <dbReference type="NCBI Taxonomy" id="357348"/>
    <lineage>
        <taxon>Bacteria</taxon>
        <taxon>Pseudomonadati</taxon>
        <taxon>Pseudomonadota</taxon>
        <taxon>Betaproteobacteria</taxon>
        <taxon>Burkholderiales</taxon>
        <taxon>Burkholderiaceae</taxon>
        <taxon>Burkholderia</taxon>
        <taxon>pseudomallei group</taxon>
    </lineage>
</organism>
<feature type="chain" id="PRO_1000015000" description="Small ribosomal subunit protein uS10">
    <location>
        <begin position="1"/>
        <end position="103"/>
    </location>
</feature>
<protein>
    <recommendedName>
        <fullName evidence="1">Small ribosomal subunit protein uS10</fullName>
    </recommendedName>
    <alternativeName>
        <fullName evidence="2">30S ribosomal protein S10</fullName>
    </alternativeName>
</protein>
<sequence>MQQQKIRIRLKAFDYRLIDQSAAEIVDTAKRTGAIVRGPVPLPTRIQRFDILRSPHVNKTSRDQLEIRTHQRLMDIVDPTDKTVDALMKLDLPAGVDVEIKLQ</sequence>
<evidence type="ECO:0000255" key="1">
    <source>
        <dbReference type="HAMAP-Rule" id="MF_00508"/>
    </source>
</evidence>
<evidence type="ECO:0000305" key="2"/>
<dbReference type="EMBL" id="CP000572">
    <property type="protein sequence ID" value="ABN92219.1"/>
    <property type="molecule type" value="Genomic_DNA"/>
</dbReference>
<dbReference type="RefSeq" id="WP_004199280.1">
    <property type="nucleotide sequence ID" value="NC_009076.1"/>
</dbReference>
<dbReference type="SMR" id="A3P0B4"/>
<dbReference type="GeneID" id="98107161"/>
<dbReference type="KEGG" id="bpl:BURPS1106A_3805"/>
<dbReference type="HOGENOM" id="CLU_122625_1_3_4"/>
<dbReference type="Proteomes" id="UP000006738">
    <property type="component" value="Chromosome I"/>
</dbReference>
<dbReference type="GO" id="GO:1990904">
    <property type="term" value="C:ribonucleoprotein complex"/>
    <property type="evidence" value="ECO:0007669"/>
    <property type="project" value="UniProtKB-KW"/>
</dbReference>
<dbReference type="GO" id="GO:0005840">
    <property type="term" value="C:ribosome"/>
    <property type="evidence" value="ECO:0007669"/>
    <property type="project" value="UniProtKB-KW"/>
</dbReference>
<dbReference type="GO" id="GO:0003735">
    <property type="term" value="F:structural constituent of ribosome"/>
    <property type="evidence" value="ECO:0007669"/>
    <property type="project" value="InterPro"/>
</dbReference>
<dbReference type="GO" id="GO:0000049">
    <property type="term" value="F:tRNA binding"/>
    <property type="evidence" value="ECO:0007669"/>
    <property type="project" value="UniProtKB-UniRule"/>
</dbReference>
<dbReference type="GO" id="GO:0006412">
    <property type="term" value="P:translation"/>
    <property type="evidence" value="ECO:0007669"/>
    <property type="project" value="UniProtKB-UniRule"/>
</dbReference>
<dbReference type="FunFam" id="3.30.70.600:FF:000001">
    <property type="entry name" value="30S ribosomal protein S10"/>
    <property type="match status" value="1"/>
</dbReference>
<dbReference type="Gene3D" id="3.30.70.600">
    <property type="entry name" value="Ribosomal protein S10 domain"/>
    <property type="match status" value="1"/>
</dbReference>
<dbReference type="HAMAP" id="MF_00508">
    <property type="entry name" value="Ribosomal_uS10"/>
    <property type="match status" value="1"/>
</dbReference>
<dbReference type="InterPro" id="IPR001848">
    <property type="entry name" value="Ribosomal_uS10"/>
</dbReference>
<dbReference type="InterPro" id="IPR018268">
    <property type="entry name" value="Ribosomal_uS10_CS"/>
</dbReference>
<dbReference type="InterPro" id="IPR027486">
    <property type="entry name" value="Ribosomal_uS10_dom"/>
</dbReference>
<dbReference type="InterPro" id="IPR036838">
    <property type="entry name" value="Ribosomal_uS10_dom_sf"/>
</dbReference>
<dbReference type="NCBIfam" id="NF001861">
    <property type="entry name" value="PRK00596.1"/>
    <property type="match status" value="1"/>
</dbReference>
<dbReference type="NCBIfam" id="TIGR01049">
    <property type="entry name" value="rpsJ_bact"/>
    <property type="match status" value="1"/>
</dbReference>
<dbReference type="PANTHER" id="PTHR11700">
    <property type="entry name" value="30S RIBOSOMAL PROTEIN S10 FAMILY MEMBER"/>
    <property type="match status" value="1"/>
</dbReference>
<dbReference type="Pfam" id="PF00338">
    <property type="entry name" value="Ribosomal_S10"/>
    <property type="match status" value="1"/>
</dbReference>
<dbReference type="PRINTS" id="PR00971">
    <property type="entry name" value="RIBOSOMALS10"/>
</dbReference>
<dbReference type="SMART" id="SM01403">
    <property type="entry name" value="Ribosomal_S10"/>
    <property type="match status" value="1"/>
</dbReference>
<dbReference type="SUPFAM" id="SSF54999">
    <property type="entry name" value="Ribosomal protein S10"/>
    <property type="match status" value="1"/>
</dbReference>
<dbReference type="PROSITE" id="PS00361">
    <property type="entry name" value="RIBOSOMAL_S10"/>
    <property type="match status" value="1"/>
</dbReference>
<proteinExistence type="inferred from homology"/>